<feature type="chain" id="PRO_0000217259" description="Polyhedrin">
    <location>
        <begin position="1"/>
        <end position="246"/>
    </location>
</feature>
<evidence type="ECO:0000305" key="1"/>
<gene>
    <name type="primary">PH</name>
    <name type="synonym">P29</name>
    <name type="synonym">POLH</name>
</gene>
<name>PYHD_NPVSE</name>
<keyword id="KW-0842">Viral occlusion body</keyword>
<comment type="function">
    <text>Major component of the virus occlusion bodies, which are large proteinaceous structures (polyhedra), that protect the virus from the outside environment for extended periods until they are ingested by insect larvae.</text>
</comment>
<comment type="similarity">
    <text evidence="1">Belongs to the polyhedrin family.</text>
</comment>
<accession>Q01586</accession>
<accession>O10379</accession>
<protein>
    <recommendedName>
        <fullName>Polyhedrin</fullName>
    </recommendedName>
    <alternativeName>
        <fullName>Major occlusion protein</fullName>
    </alternativeName>
</protein>
<sequence length="246" mass="28950">MYTRYSYNPALGRTYVYDNKFYKNLGSVIKNAKRKEHLLQHEIEERTLDPLERYVVAEDPFLGPGKNQKLTLFKEIRIVKPDTMKLVVNWSGKEFLRETWTRFMEDSFPIVNDQEIMDVFLVINMRPTRPNRCFRFLAQHALRCDPDYVPHEVIRIVEPVYVGTNNEYRISLAKKGGGCPVMNLHSEYTNSFEEFINRVIWENFYKPIVYVGTDSGEEEEILLELSLVFKIKEFAPDAPLYNGPAY</sequence>
<reference key="1">
    <citation type="journal article" date="1992" name="J. Gen. Virol.">
        <title>Nucleotide sequence and transcriptional analysis of the polyhedrin gene of Spodoptera exigua nuclear polyhedrosis virus.</title>
        <authorList>
            <person name="van Strien E.A."/>
            <person name="Zuidema D."/>
            <person name="Goldbach R.W."/>
            <person name="Vlak J.M."/>
        </authorList>
    </citation>
    <scope>NUCLEOTIDE SEQUENCE [GENOMIC DNA]</scope>
</reference>
<reference key="2">
    <citation type="journal article" date="1999" name="J. Gen. Virol.">
        <title>Sequence and organization of the Spodoptera exigua multicapsid nucleopolyhedrovirus genome.</title>
        <authorList>
            <person name="Ijkel W.F.J."/>
            <person name="van Strien E.A."/>
            <person name="Heldens J.G.M."/>
            <person name="Broer R."/>
            <person name="Zuidema D."/>
            <person name="Goldbach R.W."/>
            <person name="Vlak J.M."/>
        </authorList>
    </citation>
    <scope>NUCLEOTIDE SEQUENCE [GENOMIC DNA]</scope>
</reference>
<organism>
    <name type="scientific">Spodoptera exigua nuclear polyhedrosis virus (strain US)</name>
    <name type="common">SeMNPV</name>
    <dbReference type="NCBI Taxonomy" id="31506"/>
    <lineage>
        <taxon>Viruses</taxon>
        <taxon>Viruses incertae sedis</taxon>
        <taxon>Naldaviricetes</taxon>
        <taxon>Lefavirales</taxon>
        <taxon>Baculoviridae</taxon>
        <taxon>Alphabaculovirus</taxon>
        <taxon>Spodoptera exigua multiple nucleopolyhedrovirus</taxon>
    </lineage>
</organism>
<dbReference type="EMBL" id="AF169823">
    <property type="protein sequence ID" value="AAF33532.1"/>
    <property type="molecule type" value="Genomic_DNA"/>
</dbReference>
<dbReference type="PIR" id="JQ1868">
    <property type="entry name" value="JQ1868"/>
</dbReference>
<dbReference type="RefSeq" id="NP_037761.1">
    <property type="nucleotide sequence ID" value="NC_002169.1"/>
</dbReference>
<dbReference type="SMR" id="Q01586"/>
<dbReference type="KEGG" id="vg:2715838"/>
<dbReference type="Proteomes" id="UP000203151">
    <property type="component" value="Segment"/>
</dbReference>
<dbReference type="GO" id="GO:0039679">
    <property type="term" value="C:viral occlusion body"/>
    <property type="evidence" value="ECO:0007669"/>
    <property type="project" value="UniProtKB-KW"/>
</dbReference>
<dbReference type="GO" id="GO:0005198">
    <property type="term" value="F:structural molecule activity"/>
    <property type="evidence" value="ECO:0007669"/>
    <property type="project" value="InterPro"/>
</dbReference>
<dbReference type="InterPro" id="IPR001746">
    <property type="entry name" value="Polyhedrin"/>
</dbReference>
<dbReference type="Pfam" id="PF00738">
    <property type="entry name" value="Polyhedrin"/>
    <property type="match status" value="1"/>
</dbReference>
<proteinExistence type="inferred from homology"/>
<organismHost>
    <name type="scientific">Lepidoptera</name>
    <name type="common">butterflies and moths</name>
    <dbReference type="NCBI Taxonomy" id="7088"/>
</organismHost>